<keyword id="KW-0010">Activator</keyword>
<keyword id="KW-0025">Alternative splicing</keyword>
<keyword id="KW-0131">Cell cycle</keyword>
<keyword id="KW-0963">Cytoplasm</keyword>
<keyword id="KW-0238">DNA-binding</keyword>
<keyword id="KW-0479">Metal-binding</keyword>
<keyword id="KW-0539">Nucleus</keyword>
<keyword id="KW-1185">Reference proteome</keyword>
<keyword id="KW-0677">Repeat</keyword>
<keyword id="KW-0804">Transcription</keyword>
<keyword id="KW-0805">Transcription regulation</keyword>
<keyword id="KW-0862">Zinc</keyword>
<keyword id="KW-0863">Zinc-finger</keyword>
<name>ZBT49_MOUSE</name>
<protein>
    <recommendedName>
        <fullName>Zinc finger and BTB domain-containing protein 49</fullName>
    </recommendedName>
    <alternativeName>
        <fullName>Zinc finger protein 509</fullName>
    </alternativeName>
</protein>
<organism>
    <name type="scientific">Mus musculus</name>
    <name type="common">Mouse</name>
    <dbReference type="NCBI Taxonomy" id="10090"/>
    <lineage>
        <taxon>Eukaryota</taxon>
        <taxon>Metazoa</taxon>
        <taxon>Chordata</taxon>
        <taxon>Craniata</taxon>
        <taxon>Vertebrata</taxon>
        <taxon>Euteleostomi</taxon>
        <taxon>Mammalia</taxon>
        <taxon>Eutheria</taxon>
        <taxon>Euarchontoglires</taxon>
        <taxon>Glires</taxon>
        <taxon>Rodentia</taxon>
        <taxon>Myomorpha</taxon>
        <taxon>Muroidea</taxon>
        <taxon>Muridae</taxon>
        <taxon>Murinae</taxon>
        <taxon>Mus</taxon>
        <taxon>Mus</taxon>
    </lineage>
</organism>
<accession>Q8BXX2</accession>
<accession>Q8CID4</accession>
<accession>Q8K2Z6</accession>
<dbReference type="EMBL" id="AK043044">
    <property type="protein sequence ID" value="BAC31447.1"/>
    <property type="molecule type" value="mRNA"/>
</dbReference>
<dbReference type="EMBL" id="AK140546">
    <property type="protein sequence ID" value="BAE24420.1"/>
    <property type="molecule type" value="mRNA"/>
</dbReference>
<dbReference type="EMBL" id="BC028988">
    <property type="protein sequence ID" value="AAH28988.1"/>
    <property type="molecule type" value="mRNA"/>
</dbReference>
<dbReference type="EMBL" id="BC029122">
    <property type="protein sequence ID" value="AAH29122.1"/>
    <property type="molecule type" value="mRNA"/>
</dbReference>
<dbReference type="CCDS" id="CCDS19252.1">
    <molecule id="Q8BXX2-1"/>
</dbReference>
<dbReference type="RefSeq" id="NP_001346395.1">
    <molecule id="Q8BXX2-2"/>
    <property type="nucleotide sequence ID" value="NM_001359466.2"/>
</dbReference>
<dbReference type="RefSeq" id="NP_083438.1">
    <molecule id="Q8BXX2-1"/>
    <property type="nucleotide sequence ID" value="NM_029162.4"/>
</dbReference>
<dbReference type="RefSeq" id="XP_006504228.1">
    <property type="nucleotide sequence ID" value="XM_006504165.3"/>
</dbReference>
<dbReference type="SMR" id="Q8BXX2"/>
<dbReference type="FunCoup" id="Q8BXX2">
    <property type="interactions" value="4032"/>
</dbReference>
<dbReference type="STRING" id="10090.ENSMUSP00000092429"/>
<dbReference type="iPTMnet" id="Q8BXX2"/>
<dbReference type="PhosphoSitePlus" id="Q8BXX2"/>
<dbReference type="PaxDb" id="10090-ENSMUSP00000092429"/>
<dbReference type="ProteomicsDB" id="302103">
    <molecule id="Q8BXX2-1"/>
</dbReference>
<dbReference type="ProteomicsDB" id="302104">
    <molecule id="Q8BXX2-2"/>
</dbReference>
<dbReference type="ProteomicsDB" id="302105">
    <molecule id="Q8BXX2-3"/>
</dbReference>
<dbReference type="Antibodypedia" id="9229">
    <property type="antibodies" value="101 antibodies from 21 providers"/>
</dbReference>
<dbReference type="DNASU" id="75079"/>
<dbReference type="Ensembl" id="ENSMUST00000094833.10">
    <molecule id="Q8BXX2-1"/>
    <property type="protein sequence ID" value="ENSMUSP00000092429.4"/>
    <property type="gene ID" value="ENSMUSG00000029127.16"/>
</dbReference>
<dbReference type="GeneID" id="75079"/>
<dbReference type="KEGG" id="mmu:75079"/>
<dbReference type="UCSC" id="uc008xgc.1">
    <molecule id="Q8BXX2-1"/>
    <property type="organism name" value="mouse"/>
</dbReference>
<dbReference type="UCSC" id="uc008xge.1">
    <molecule id="Q8BXX2-3"/>
    <property type="organism name" value="mouse"/>
</dbReference>
<dbReference type="AGR" id="MGI:1922329"/>
<dbReference type="CTD" id="166793"/>
<dbReference type="MGI" id="MGI:1922329">
    <property type="gene designation" value="Zbtb49"/>
</dbReference>
<dbReference type="VEuPathDB" id="HostDB:ENSMUSG00000029127"/>
<dbReference type="eggNOG" id="KOG1721">
    <property type="taxonomic scope" value="Eukaryota"/>
</dbReference>
<dbReference type="GeneTree" id="ENSGT00940000158750"/>
<dbReference type="HOGENOM" id="CLU_018392_0_0_1"/>
<dbReference type="InParanoid" id="Q8BXX2"/>
<dbReference type="OMA" id="QKQYTCE"/>
<dbReference type="OrthoDB" id="407106at2759"/>
<dbReference type="PhylomeDB" id="Q8BXX2"/>
<dbReference type="TreeFam" id="TF330993"/>
<dbReference type="BioGRID-ORCS" id="75079">
    <property type="hits" value="3 hits in 76 CRISPR screens"/>
</dbReference>
<dbReference type="ChiTaRS" id="Zbtb49">
    <property type="organism name" value="mouse"/>
</dbReference>
<dbReference type="PRO" id="PR:Q8BXX2"/>
<dbReference type="Proteomes" id="UP000000589">
    <property type="component" value="Chromosome 5"/>
</dbReference>
<dbReference type="RNAct" id="Q8BXX2">
    <property type="molecule type" value="protein"/>
</dbReference>
<dbReference type="Bgee" id="ENSMUSG00000029127">
    <property type="expression patterns" value="Expressed in spermatocyte and 112 other cell types or tissues"/>
</dbReference>
<dbReference type="ExpressionAtlas" id="Q8BXX2">
    <property type="expression patterns" value="baseline and differential"/>
</dbReference>
<dbReference type="GO" id="GO:0005737">
    <property type="term" value="C:cytoplasm"/>
    <property type="evidence" value="ECO:0000250"/>
    <property type="project" value="UniProtKB"/>
</dbReference>
<dbReference type="GO" id="GO:0005829">
    <property type="term" value="C:cytosol"/>
    <property type="evidence" value="ECO:0007669"/>
    <property type="project" value="Ensembl"/>
</dbReference>
<dbReference type="GO" id="GO:0015630">
    <property type="term" value="C:microtubule cytoskeleton"/>
    <property type="evidence" value="ECO:0007669"/>
    <property type="project" value="Ensembl"/>
</dbReference>
<dbReference type="GO" id="GO:0005654">
    <property type="term" value="C:nucleoplasm"/>
    <property type="evidence" value="ECO:0007669"/>
    <property type="project" value="Ensembl"/>
</dbReference>
<dbReference type="GO" id="GO:0005634">
    <property type="term" value="C:nucleus"/>
    <property type="evidence" value="ECO:0000250"/>
    <property type="project" value="UniProtKB"/>
</dbReference>
<dbReference type="GO" id="GO:0140297">
    <property type="term" value="F:DNA-binding transcription factor binding"/>
    <property type="evidence" value="ECO:0007669"/>
    <property type="project" value="Ensembl"/>
</dbReference>
<dbReference type="GO" id="GO:0043565">
    <property type="term" value="F:sequence-specific DNA binding"/>
    <property type="evidence" value="ECO:0000250"/>
    <property type="project" value="UniProtKB"/>
</dbReference>
<dbReference type="GO" id="GO:0001223">
    <property type="term" value="F:transcription coactivator binding"/>
    <property type="evidence" value="ECO:0007669"/>
    <property type="project" value="Ensembl"/>
</dbReference>
<dbReference type="GO" id="GO:0008270">
    <property type="term" value="F:zinc ion binding"/>
    <property type="evidence" value="ECO:0007669"/>
    <property type="project" value="UniProtKB-KW"/>
</dbReference>
<dbReference type="GO" id="GO:0008285">
    <property type="term" value="P:negative regulation of cell population proliferation"/>
    <property type="evidence" value="ECO:0000250"/>
    <property type="project" value="UniProtKB"/>
</dbReference>
<dbReference type="GO" id="GO:0045944">
    <property type="term" value="P:positive regulation of transcription by RNA polymerase II"/>
    <property type="evidence" value="ECO:0000250"/>
    <property type="project" value="UniProtKB"/>
</dbReference>
<dbReference type="GO" id="GO:0051726">
    <property type="term" value="P:regulation of cell cycle"/>
    <property type="evidence" value="ECO:0000250"/>
    <property type="project" value="UniProtKB"/>
</dbReference>
<dbReference type="CDD" id="cd18233">
    <property type="entry name" value="BTB_POZ_ZBTB49"/>
    <property type="match status" value="1"/>
</dbReference>
<dbReference type="FunFam" id="3.30.160.60:FF:000166">
    <property type="entry name" value="Zinc finger and BTB domain-containing 49"/>
    <property type="match status" value="1"/>
</dbReference>
<dbReference type="FunFam" id="3.30.160.60:FF:000267">
    <property type="entry name" value="Zinc finger and BTB domain-containing 49"/>
    <property type="match status" value="1"/>
</dbReference>
<dbReference type="FunFam" id="3.30.710.10:FF:000048">
    <property type="entry name" value="zinc finger and BTB domain-containing protein 17"/>
    <property type="match status" value="1"/>
</dbReference>
<dbReference type="FunFam" id="3.30.160.60:FF:000835">
    <property type="entry name" value="Zinc finger and BTB domain-containing protein 49"/>
    <property type="match status" value="1"/>
</dbReference>
<dbReference type="FunFam" id="3.30.160.60:FF:000927">
    <property type="entry name" value="Zinc finger and BTB domain-containing protein 49"/>
    <property type="match status" value="1"/>
</dbReference>
<dbReference type="FunFam" id="3.30.160.60:FF:001123">
    <property type="entry name" value="Zinc finger and BTB domain-containing protein 49"/>
    <property type="match status" value="1"/>
</dbReference>
<dbReference type="FunFam" id="3.30.160.60:FF:001338">
    <property type="entry name" value="Zinc finger and BTB domain-containing protein 49"/>
    <property type="match status" value="1"/>
</dbReference>
<dbReference type="FunFam" id="3.30.160.60:FF:001099">
    <property type="entry name" value="zinc finger and BTB domain-containing protein 49"/>
    <property type="match status" value="1"/>
</dbReference>
<dbReference type="Gene3D" id="3.30.160.60">
    <property type="entry name" value="Classic Zinc Finger"/>
    <property type="match status" value="7"/>
</dbReference>
<dbReference type="Gene3D" id="3.30.710.10">
    <property type="entry name" value="Potassium Channel Kv1.1, Chain A"/>
    <property type="match status" value="1"/>
</dbReference>
<dbReference type="InterPro" id="IPR000210">
    <property type="entry name" value="BTB/POZ_dom"/>
</dbReference>
<dbReference type="InterPro" id="IPR011333">
    <property type="entry name" value="SKP1/BTB/POZ_sf"/>
</dbReference>
<dbReference type="InterPro" id="IPR036236">
    <property type="entry name" value="Znf_C2H2_sf"/>
</dbReference>
<dbReference type="InterPro" id="IPR013087">
    <property type="entry name" value="Znf_C2H2_type"/>
</dbReference>
<dbReference type="InterPro" id="IPR050457">
    <property type="entry name" value="ZnFinger_BTB_dom_contain"/>
</dbReference>
<dbReference type="PANTHER" id="PTHR46105">
    <property type="entry name" value="AGAP004733-PA"/>
    <property type="match status" value="1"/>
</dbReference>
<dbReference type="PANTHER" id="PTHR46105:SF30">
    <property type="entry name" value="ZINC FINGER AND BTB DOMAIN CONTAINING 49"/>
    <property type="match status" value="1"/>
</dbReference>
<dbReference type="Pfam" id="PF00651">
    <property type="entry name" value="BTB"/>
    <property type="match status" value="1"/>
</dbReference>
<dbReference type="Pfam" id="PF00096">
    <property type="entry name" value="zf-C2H2"/>
    <property type="match status" value="6"/>
</dbReference>
<dbReference type="Pfam" id="PF13912">
    <property type="entry name" value="zf-C2H2_6"/>
    <property type="match status" value="1"/>
</dbReference>
<dbReference type="SMART" id="SM00225">
    <property type="entry name" value="BTB"/>
    <property type="match status" value="1"/>
</dbReference>
<dbReference type="SMART" id="SM00355">
    <property type="entry name" value="ZnF_C2H2"/>
    <property type="match status" value="7"/>
</dbReference>
<dbReference type="SUPFAM" id="SSF57667">
    <property type="entry name" value="beta-beta-alpha zinc fingers"/>
    <property type="match status" value="4"/>
</dbReference>
<dbReference type="SUPFAM" id="SSF54695">
    <property type="entry name" value="POZ domain"/>
    <property type="match status" value="1"/>
</dbReference>
<dbReference type="PROSITE" id="PS50097">
    <property type="entry name" value="BTB"/>
    <property type="match status" value="1"/>
</dbReference>
<dbReference type="PROSITE" id="PS00028">
    <property type="entry name" value="ZINC_FINGER_C2H2_1"/>
    <property type="match status" value="7"/>
</dbReference>
<dbReference type="PROSITE" id="PS50157">
    <property type="entry name" value="ZINC_FINGER_C2H2_2"/>
    <property type="match status" value="7"/>
</dbReference>
<sequence>MDPVAVHSCHLLQQLREQRIQGLLCDCMLVVRGVCFKAHKNVLAAFSQYFRSLFQNSSSQKNDVFHLDVTNVSGIGQILDFMYTSRLDLNQDNIQVMLDTAQCLQVQNVLNLCHTFLKSAPAAQLPGLPCAGGFSLQSVALDGTCAVSEHYPPPSLQECPVEGPQAKVPAEVNARAPSANFSRPTEVSKPDAAGGSCPELPCKQPNHYYKLRTLYSKQYYKQTACPSQVPATQQPLTRSASTDLAAADSQPPVEGRPAVLETPEHLPSTFVAPPVRNSGNDSEADPLSEPPAKQMRLKKAMHLKKLNFLKSQQSAECTSHPEPDNGLARREESAAKEDAVERAGSQTAEEKGRGELGPESSREEELPGAPASWEDPSQALQPQKQYACELCGKPFKHPSNLELHKRSHTGEKPFECNICGKHFSQAGNLQTHLRRHSGEKPYICEICGKRFAASGDVQRHIIIHSGEKPHLCDTCGRGFSNFSNLKEHKKTHTADKVFTCDECGKSFNMQRKLVKHRVRHTGERPYSCPACGKCFGGSGDLRRHVRTHTGEKPYSCEVCSKCFTRSAVLRRHKRMHGRADARSPVVLGELSRPIEPSDLDRSQSSDSFSQDVSVTLMPVSVKLPVQPVESSVAGFDGHCSGSYCKLRSMLRPPGMSDQDRLSLEPSKLAKPPELQSQPQAYAYSDVEPSAGVEQPQADGMAVSRSSLATLDNHCTEPLGSRAPSVTYRNSEGQFFSSMTLWGLAMKTLQNEHELEQ</sequence>
<feature type="chain" id="PRO_0000047627" description="Zinc finger and BTB domain-containing protein 49">
    <location>
        <begin position="1"/>
        <end position="756"/>
    </location>
</feature>
<feature type="domain" description="BTB" evidence="2">
    <location>
        <begin position="25"/>
        <end position="91"/>
    </location>
</feature>
<feature type="zinc finger region" description="C2H2-type 1" evidence="3">
    <location>
        <begin position="386"/>
        <end position="408"/>
    </location>
</feature>
<feature type="zinc finger region" description="C2H2-type 2" evidence="3">
    <location>
        <begin position="414"/>
        <end position="436"/>
    </location>
</feature>
<feature type="zinc finger region" description="C2H2-type 3" evidence="3">
    <location>
        <begin position="442"/>
        <end position="464"/>
    </location>
</feature>
<feature type="zinc finger region" description="C2H2-type 4" evidence="3">
    <location>
        <begin position="470"/>
        <end position="492"/>
    </location>
</feature>
<feature type="zinc finger region" description="C2H2-type 5" evidence="3">
    <location>
        <begin position="498"/>
        <end position="520"/>
    </location>
</feature>
<feature type="zinc finger region" description="C2H2-type 6" evidence="3">
    <location>
        <begin position="526"/>
        <end position="548"/>
    </location>
</feature>
<feature type="zinc finger region" description="C2H2-type 7" evidence="3">
    <location>
        <begin position="554"/>
        <end position="576"/>
    </location>
</feature>
<feature type="region of interest" description="Disordered" evidence="4">
    <location>
        <begin position="176"/>
        <end position="197"/>
    </location>
</feature>
<feature type="region of interest" description="Disordered" evidence="4">
    <location>
        <begin position="226"/>
        <end position="290"/>
    </location>
</feature>
<feature type="region of interest" description="Disordered" evidence="4">
    <location>
        <begin position="311"/>
        <end position="379"/>
    </location>
</feature>
<feature type="compositionally biased region" description="Polar residues" evidence="4">
    <location>
        <begin position="226"/>
        <end position="242"/>
    </location>
</feature>
<feature type="compositionally biased region" description="Basic and acidic residues" evidence="4">
    <location>
        <begin position="319"/>
        <end position="341"/>
    </location>
</feature>
<feature type="compositionally biased region" description="Basic and acidic residues" evidence="4">
    <location>
        <begin position="348"/>
        <end position="365"/>
    </location>
</feature>
<feature type="splice variant" id="VSP_016344" description="In isoform 3." evidence="6">
    <location>
        <begin position="1"/>
        <end position="508"/>
    </location>
</feature>
<feature type="splice variant" id="VSP_016345" description="In isoform 2." evidence="6">
    <location>
        <begin position="1"/>
        <end position="284"/>
    </location>
</feature>
<feature type="splice variant" id="VSP_016346" description="In isoform 2." evidence="6">
    <original>DPLSEPPAKQMRLKKAMHLKKLNFLKSQQSAECTSHPEPDNGLARREESAAKEDAVERAGSQTAEEKGRGELGPESSREEELPGAPASWEDPSQALQPQKQYACELCGKPFKHPSNLELHKRSHTGEKPFECNICGKHFS</original>
    <variation>MGWPGGRSLLLRKMQWRELEARLLKKKGGENWVQRAAVRRSCQEPQLPGKTRPRLSSPRNSMHVNCVGSLLNTQAIWSCTNGLI</variation>
    <location>
        <begin position="285"/>
        <end position="424"/>
    </location>
</feature>
<evidence type="ECO:0000250" key="1">
    <source>
        <dbReference type="UniProtKB" id="Q6ZSB9"/>
    </source>
</evidence>
<evidence type="ECO:0000255" key="2">
    <source>
        <dbReference type="PROSITE-ProRule" id="PRU00037"/>
    </source>
</evidence>
<evidence type="ECO:0000255" key="3">
    <source>
        <dbReference type="PROSITE-ProRule" id="PRU00042"/>
    </source>
</evidence>
<evidence type="ECO:0000256" key="4">
    <source>
        <dbReference type="SAM" id="MobiDB-lite"/>
    </source>
</evidence>
<evidence type="ECO:0000269" key="5">
    <source>
    </source>
</evidence>
<evidence type="ECO:0000303" key="6">
    <source>
    </source>
</evidence>
<evidence type="ECO:0000305" key="7"/>
<comment type="function">
    <text evidence="1">Transcription factor. Inhibits cell proliferation by activating either CDKN1A/p21 transcription or RB1 transcription.</text>
</comment>
<comment type="subunit">
    <text evidence="1">Interacts with EP300, KAT5/Tip60 and ZBTB17. The interaction with EP300 is direct and leads to synergistic induction of CDKN1A. On the CDKN1A promoter, forms a complex with ZBTB17; this interaction leads to additive CDKN1A transactivation. The interaction with ZBTB17 may block ZBTB17 repressor activity.</text>
</comment>
<comment type="subcellular location">
    <subcellularLocation>
        <location evidence="1">Cytoplasm</location>
    </subcellularLocation>
    <subcellularLocation>
        <location evidence="1">Nucleus</location>
    </subcellularLocation>
</comment>
<comment type="alternative products">
    <event type="alternative splicing"/>
    <isoform>
        <id>Q8BXX2-1</id>
        <name>1</name>
        <sequence type="displayed"/>
    </isoform>
    <isoform>
        <id>Q8BXX2-2</id>
        <name>2</name>
        <sequence type="described" ref="VSP_016345 VSP_016346"/>
    </isoform>
    <isoform>
        <id>Q8BXX2-3</id>
        <name>3</name>
        <sequence type="described" ref="VSP_016344"/>
    </isoform>
</comment>
<comment type="tissue specificity">
    <text evidence="5">Widely expressed, with highest levels in white adipose tissue and kidney, intermediate levels in brain, liver and heart, and lowest levels in spleen, brown adipose tissue and muscle.</text>
</comment>
<comment type="similarity">
    <text evidence="7">Belongs to the krueppel C2H2-type zinc-finger protein family.</text>
</comment>
<gene>
    <name type="primary">Zbtb49</name>
    <name type="synonym">Zfp509</name>
    <name type="synonym">Znf509</name>
</gene>
<reference key="1">
    <citation type="journal article" date="2005" name="Science">
        <title>The transcriptional landscape of the mammalian genome.</title>
        <authorList>
            <person name="Carninci P."/>
            <person name="Kasukawa T."/>
            <person name="Katayama S."/>
            <person name="Gough J."/>
            <person name="Frith M.C."/>
            <person name="Maeda N."/>
            <person name="Oyama R."/>
            <person name="Ravasi T."/>
            <person name="Lenhard B."/>
            <person name="Wells C."/>
            <person name="Kodzius R."/>
            <person name="Shimokawa K."/>
            <person name="Bajic V.B."/>
            <person name="Brenner S.E."/>
            <person name="Batalov S."/>
            <person name="Forrest A.R."/>
            <person name="Zavolan M."/>
            <person name="Davis M.J."/>
            <person name="Wilming L.G."/>
            <person name="Aidinis V."/>
            <person name="Allen J.E."/>
            <person name="Ambesi-Impiombato A."/>
            <person name="Apweiler R."/>
            <person name="Aturaliya R.N."/>
            <person name="Bailey T.L."/>
            <person name="Bansal M."/>
            <person name="Baxter L."/>
            <person name="Beisel K.W."/>
            <person name="Bersano T."/>
            <person name="Bono H."/>
            <person name="Chalk A.M."/>
            <person name="Chiu K.P."/>
            <person name="Choudhary V."/>
            <person name="Christoffels A."/>
            <person name="Clutterbuck D.R."/>
            <person name="Crowe M.L."/>
            <person name="Dalla E."/>
            <person name="Dalrymple B.P."/>
            <person name="de Bono B."/>
            <person name="Della Gatta G."/>
            <person name="di Bernardo D."/>
            <person name="Down T."/>
            <person name="Engstrom P."/>
            <person name="Fagiolini M."/>
            <person name="Faulkner G."/>
            <person name="Fletcher C.F."/>
            <person name="Fukushima T."/>
            <person name="Furuno M."/>
            <person name="Futaki S."/>
            <person name="Gariboldi M."/>
            <person name="Georgii-Hemming P."/>
            <person name="Gingeras T.R."/>
            <person name="Gojobori T."/>
            <person name="Green R.E."/>
            <person name="Gustincich S."/>
            <person name="Harbers M."/>
            <person name="Hayashi Y."/>
            <person name="Hensch T.K."/>
            <person name="Hirokawa N."/>
            <person name="Hill D."/>
            <person name="Huminiecki L."/>
            <person name="Iacono M."/>
            <person name="Ikeo K."/>
            <person name="Iwama A."/>
            <person name="Ishikawa T."/>
            <person name="Jakt M."/>
            <person name="Kanapin A."/>
            <person name="Katoh M."/>
            <person name="Kawasawa Y."/>
            <person name="Kelso J."/>
            <person name="Kitamura H."/>
            <person name="Kitano H."/>
            <person name="Kollias G."/>
            <person name="Krishnan S.P."/>
            <person name="Kruger A."/>
            <person name="Kummerfeld S.K."/>
            <person name="Kurochkin I.V."/>
            <person name="Lareau L.F."/>
            <person name="Lazarevic D."/>
            <person name="Lipovich L."/>
            <person name="Liu J."/>
            <person name="Liuni S."/>
            <person name="McWilliam S."/>
            <person name="Madan Babu M."/>
            <person name="Madera M."/>
            <person name="Marchionni L."/>
            <person name="Matsuda H."/>
            <person name="Matsuzawa S."/>
            <person name="Miki H."/>
            <person name="Mignone F."/>
            <person name="Miyake S."/>
            <person name="Morris K."/>
            <person name="Mottagui-Tabar S."/>
            <person name="Mulder N."/>
            <person name="Nakano N."/>
            <person name="Nakauchi H."/>
            <person name="Ng P."/>
            <person name="Nilsson R."/>
            <person name="Nishiguchi S."/>
            <person name="Nishikawa S."/>
            <person name="Nori F."/>
            <person name="Ohara O."/>
            <person name="Okazaki Y."/>
            <person name="Orlando V."/>
            <person name="Pang K.C."/>
            <person name="Pavan W.J."/>
            <person name="Pavesi G."/>
            <person name="Pesole G."/>
            <person name="Petrovsky N."/>
            <person name="Piazza S."/>
            <person name="Reed J."/>
            <person name="Reid J.F."/>
            <person name="Ring B.Z."/>
            <person name="Ringwald M."/>
            <person name="Rost B."/>
            <person name="Ruan Y."/>
            <person name="Salzberg S.L."/>
            <person name="Sandelin A."/>
            <person name="Schneider C."/>
            <person name="Schoenbach C."/>
            <person name="Sekiguchi K."/>
            <person name="Semple C.A."/>
            <person name="Seno S."/>
            <person name="Sessa L."/>
            <person name="Sheng Y."/>
            <person name="Shibata Y."/>
            <person name="Shimada H."/>
            <person name="Shimada K."/>
            <person name="Silva D."/>
            <person name="Sinclair B."/>
            <person name="Sperling S."/>
            <person name="Stupka E."/>
            <person name="Sugiura K."/>
            <person name="Sultana R."/>
            <person name="Takenaka Y."/>
            <person name="Taki K."/>
            <person name="Tammoja K."/>
            <person name="Tan S.L."/>
            <person name="Tang S."/>
            <person name="Taylor M.S."/>
            <person name="Tegner J."/>
            <person name="Teichmann S.A."/>
            <person name="Ueda H.R."/>
            <person name="van Nimwegen E."/>
            <person name="Verardo R."/>
            <person name="Wei C.L."/>
            <person name="Yagi K."/>
            <person name="Yamanishi H."/>
            <person name="Zabarovsky E."/>
            <person name="Zhu S."/>
            <person name="Zimmer A."/>
            <person name="Hide W."/>
            <person name="Bult C."/>
            <person name="Grimmond S.M."/>
            <person name="Teasdale R.D."/>
            <person name="Liu E.T."/>
            <person name="Brusic V."/>
            <person name="Quackenbush J."/>
            <person name="Wahlestedt C."/>
            <person name="Mattick J.S."/>
            <person name="Hume D.A."/>
            <person name="Kai C."/>
            <person name="Sasaki D."/>
            <person name="Tomaru Y."/>
            <person name="Fukuda S."/>
            <person name="Kanamori-Katayama M."/>
            <person name="Suzuki M."/>
            <person name="Aoki J."/>
            <person name="Arakawa T."/>
            <person name="Iida J."/>
            <person name="Imamura K."/>
            <person name="Itoh M."/>
            <person name="Kato T."/>
            <person name="Kawaji H."/>
            <person name="Kawagashira N."/>
            <person name="Kawashima T."/>
            <person name="Kojima M."/>
            <person name="Kondo S."/>
            <person name="Konno H."/>
            <person name="Nakano K."/>
            <person name="Ninomiya N."/>
            <person name="Nishio T."/>
            <person name="Okada M."/>
            <person name="Plessy C."/>
            <person name="Shibata K."/>
            <person name="Shiraki T."/>
            <person name="Suzuki S."/>
            <person name="Tagami M."/>
            <person name="Waki K."/>
            <person name="Watahiki A."/>
            <person name="Okamura-Oho Y."/>
            <person name="Suzuki H."/>
            <person name="Kawai J."/>
            <person name="Hayashizaki Y."/>
        </authorList>
    </citation>
    <scope>NUCLEOTIDE SEQUENCE [LARGE SCALE MRNA] (ISOFORM 1)</scope>
    <source>
        <strain>C57BL/6J</strain>
        <tissue>Cerebellum</tissue>
    </source>
</reference>
<reference key="2">
    <citation type="journal article" date="2004" name="Genome Res.">
        <title>The status, quality, and expansion of the NIH full-length cDNA project: the Mammalian Gene Collection (MGC).</title>
        <authorList>
            <consortium name="The MGC Project Team"/>
        </authorList>
    </citation>
    <scope>NUCLEOTIDE SEQUENCE [LARGE SCALE MRNA] (ISOFORMS 2 AND 3)</scope>
    <source>
        <strain>FVB/N-3</strain>
        <tissue>Mammary tumor</tissue>
    </source>
</reference>
<reference key="3">
    <citation type="journal article" date="2014" name="Nucleic Acids Res.">
        <title>Two ZNF509 (ZBTB49) isoforms induce cell-cycle arrest by activating transcription of p21/CDKN1A and RB upon exposure to genotoxic stress.</title>
        <authorList>
            <person name="Jeon B.N."/>
            <person name="Kim M.K."/>
            <person name="Yoon J.H."/>
            <person name="Kim M.Y."/>
            <person name="An H."/>
            <person name="Noh H.J."/>
            <person name="Choi W.I."/>
            <person name="Koh D.I."/>
            <person name="Hur M.W."/>
        </authorList>
    </citation>
    <scope>TISSUE SPECIFICITY</scope>
</reference>
<proteinExistence type="evidence at transcript level"/>